<accession>Q1A264</accession>
<proteinExistence type="inferred from homology"/>
<evidence type="ECO:0000255" key="1">
    <source>
        <dbReference type="HAMAP-Rule" id="MF_04079"/>
    </source>
</evidence>
<evidence type="ECO:0000256" key="2">
    <source>
        <dbReference type="SAM" id="MobiDB-lite"/>
    </source>
</evidence>
<comment type="function">
    <text evidence="1">Transcriptional activator that increases RNA Pol II processivity, thereby increasing the level of full-length viral transcripts. Recognizes a hairpin structure at the 5'-LTR of the nascent viral mRNAs referred to as the transactivation responsive RNA element (TAR) and recruits the cyclin T1-CDK9 complex (P-TEFb complex) that will in turn hyperphosphorylate the RNA polymerase II to allow efficient elongation. The CDK9 component of P-TEFb and other Tat-activated kinases hyperphosphorylate the C-terminus of RNA Pol II that becomes stabilized and much more processive. Other factors such as HTATSF1/Tat-SF1, SUPT5H/SPT5, and HTATIP2 are also important for Tat's function. Besides its effect on RNA Pol II processivity, Tat induces chromatin remodeling of proviral genes by recruiting the histone acetyltransferases (HATs) CREBBP, EP300 and PCAF to the chromatin. This also contributes to the increase in proviral transcription rate, especially when the provirus integrates in transcriptionally silent region of the host genome. To ensure maximal activation of the LTR, Tat mediates nuclear translocation of NF-kappa-B by interacting with host RELA. Through its interaction with host TBP, Tat may also modulate transcription initiation. Tat can reactivate a latently infected cell by penetrating in it and transactivating its LTR promoter. In the cytoplasm, Tat is thought to act as a translational activator of HIV-1 mRNAs.</text>
</comment>
<comment type="function">
    <text evidence="1">Extracellular circulating Tat can be endocytosed by surrounding uninfected cells via the binding to several surface receptors such as CD26, CXCR4, heparan sulfate proteoglycans (HSPG) or LDLR. Neurons are rarely infected, but they internalize Tat via their LDLR. Through its interaction with nuclear HATs, Tat is potentially able to control the acetylation-dependent cellular gene expression. Modulates the expression of many cellular genes involved in cell survival, proliferation or in coding for cytokines or cytokine receptors. Tat plays a role in T-cell and neurons apoptosis. Tat induced neurotoxicity and apoptosis probably contribute to neuroAIDS. Circulating Tat also acts as a chemokine-like and/or growth factor-like molecule that binds to specific receptors on the surface of the cells, affecting many cellular pathways. In the vascular system, Tat binds to ITGAV/ITGB3 and ITGA5/ITGB1 integrins dimers at the surface of endothelial cells and competes with bFGF for heparin-binding sites, leading to an excess of soluble bFGF.</text>
</comment>
<comment type="subunit">
    <text evidence="1">Interacts with host CCNT1. Associates with the P-TEFb complex composed at least of Tat, P-TEFb (CDK9 and CCNT1), TAR RNA, RNA Pol II. Recruits the HATs CREBBP, TAF1/TFIID, EP300, PCAF and GCN5L2. Interacts with host KAT5/Tip60; this interaction targets the latter to degradation. Interacts with the host deacetylase SIRT1. Interacts with host capping enzyme RNGTT; this interaction stimulates RNGTT. Binds to host KDR, and to the host integrins ITGAV/ITGB3 and ITGA5/ITGB1. Interacts with host KPNB1/importin beta-1 without previous binding to KPNA1/importin alpha-1. Interacts with EIF2AK2. Interacts with host nucleosome assembly protein NAP1L1; this interaction may be required for the transport of Tat within the nucleus, since the two proteins interact at the nuclear rim. Interacts with host C1QBP/SF2P32; this interaction involves lysine-acetylated Tat. Interacts with the host chemokine receptors CCR2, CCR3 and CXCR4. Interacts with host DPP4/CD26; this interaction may trigger an anti-proliferative effect. Interacts with host LDLR. Interacts with the host extracellular matrix metalloproteinase MMP1. Interacts with host PRMT6; this interaction mediates Tat's methylation. Interacts with, and is ubiquitinated by MDM2/Hdm2. Interacts with host PSMC3 and HTATIP2. Interacts with STAB1; this interaction may overcome SATB1-mediated repression of IL2 and IL2RA (interleukin) in T cells by binding to the same domain than HDAC1. Interacts (when acetylated) with human CDK13, thereby increasing HIV-1 mRNA splicing and promoting the production of the doubly spliced HIV-1 protein Nef. Interacts with host TBP; this interaction modulates the activity of transcriptional pre-initiation complex. Interacts with host RELA.</text>
</comment>
<comment type="subcellular location">
    <subcellularLocation>
        <location evidence="1">Host nucleus</location>
        <location evidence="1">Host nucleolus</location>
    </subcellularLocation>
    <subcellularLocation>
        <location evidence="1">Host cytoplasm</location>
    </subcellularLocation>
    <subcellularLocation>
        <location evidence="1">Secreted</location>
    </subcellularLocation>
    <text evidence="1">Probably localizes to both nuclear and nucleolar compartments. Nuclear localization is mediated through the interaction of the nuclear localization signal with importin KPNB1. Secretion occurs through a Golgi-independent pathway. Tat is released from infected cells to the extracellular space where it remains associated to the cell membrane, or is secreted into the cerebrospinal fluid and sera. Extracellular Tat can be endocytosed by surrounding uninfected cells via binding to several receptors depending on the cell type.</text>
</comment>
<comment type="domain">
    <text evidence="1">The cell attachment site mediates the interaction with ITGAV/ITGB3 and ITGA5/ITGB1 integrins, leading to vascular cell migration and invasion. This interaction also provides endothelial cells with the adhesion signal they require to grow in response to mitogens.</text>
</comment>
<comment type="domain">
    <text evidence="1">The Cys-rich region may bind 2 zinc ions. This region is involved in binding to KAT5.</text>
</comment>
<comment type="domain">
    <text evidence="1">The transactivation domain mediates the interaction with CCNT1, GCN5L2, and MDM2.</text>
</comment>
<comment type="domain">
    <text evidence="1">The Arg-rich RNA-binding region binds the TAR RNA. This region also mediates the nuclear localization through direct binding to KPNB1 and is involved in Tat's transfer across cell membranes (protein transduction). The same region is required for the interaction with EP300, PCAF, EIF2AK2 and KDR.</text>
</comment>
<comment type="PTM">
    <text evidence="1">Asymmetrical arginine methylation by host PRMT6 seems to diminish the transactivation capacity of Tat and affects the interaction with host CCNT1.</text>
</comment>
<comment type="PTM">
    <text evidence="1">Polyubiquitination by host MDM2 does not target Tat to degradation, but activates its transactivation function and fosters interaction with CCNT1 and TAR RNA.</text>
</comment>
<comment type="PTM">
    <text evidence="1">Phosphorylated by EIF2AK2 on serine and threonine residues adjacent to the basic region important for TAR RNA binding and function. Phosphorylation of Tat by EIF2AK2 is dependent on the prior activation of EIF2AK2 by dsRNA.</text>
</comment>
<comment type="miscellaneous">
    <text evidence="1">HIV-1 lineages are divided in three main groups, M (for Major), O (for Outlier), and N (for New, or Non-M, Non-O). The vast majority of strains found worldwide belong to the group M. Group O seems to be endemic to and largely confined to Cameroon and neighboring countries in West Central Africa, where these viruses represent a small minority of HIV-1 strains. The group N is represented by a limited number of isolates from Cameroonian persons. The group M is further subdivided in 9 clades or subtypes (A to D, F to H, J and K).</text>
</comment>
<comment type="similarity">
    <text evidence="1">Belongs to the lentiviruses Tat family.</text>
</comment>
<organismHost>
    <name type="scientific">Pan troglodytes</name>
    <name type="common">Chimpanzee</name>
    <dbReference type="NCBI Taxonomy" id="9598"/>
</organismHost>
<feature type="chain" id="PRO_0000248194" description="Protein Tat">
    <location>
        <begin position="1"/>
        <end position="101"/>
    </location>
</feature>
<feature type="region of interest" description="Transactivation" evidence="1">
    <location>
        <begin position="1"/>
        <end position="48"/>
    </location>
</feature>
<feature type="region of interest" description="Interaction with human CREBBP" evidence="1">
    <location>
        <begin position="1"/>
        <end position="24"/>
    </location>
</feature>
<feature type="region of interest" description="Cysteine-rich" evidence="1">
    <location>
        <begin position="22"/>
        <end position="37"/>
    </location>
</feature>
<feature type="region of interest" description="Core" evidence="1">
    <location>
        <begin position="38"/>
        <end position="48"/>
    </location>
</feature>
<feature type="region of interest" description="Disordered" evidence="2">
    <location>
        <begin position="48"/>
        <end position="101"/>
    </location>
</feature>
<feature type="region of interest" description="Interaction with the host capping enzyme RNGTT" evidence="1">
    <location>
        <begin position="49"/>
        <end position="86"/>
    </location>
</feature>
<feature type="short sequence motif" description="Nuclear localization signal, RNA-binding (TAR), and protein transduction" evidence="1">
    <location>
        <begin position="49"/>
        <end position="57"/>
    </location>
</feature>
<feature type="binding site" evidence="1">
    <location>
        <position position="22"/>
    </location>
    <ligand>
        <name>Zn(2+)</name>
        <dbReference type="ChEBI" id="CHEBI:29105"/>
        <label>1</label>
    </ligand>
</feature>
<feature type="binding site" evidence="1">
    <location>
        <position position="25"/>
    </location>
    <ligand>
        <name>Zn(2+)</name>
        <dbReference type="ChEBI" id="CHEBI:29105"/>
        <label>2</label>
    </ligand>
</feature>
<feature type="binding site" evidence="1">
    <location>
        <position position="27"/>
    </location>
    <ligand>
        <name>Zn(2+)</name>
        <dbReference type="ChEBI" id="CHEBI:29105"/>
        <label>2</label>
    </ligand>
</feature>
<feature type="binding site" evidence="1">
    <location>
        <position position="30"/>
    </location>
    <ligand>
        <name>Zn(2+)</name>
        <dbReference type="ChEBI" id="CHEBI:29105"/>
        <label>2</label>
    </ligand>
</feature>
<feature type="binding site" evidence="1">
    <location>
        <position position="33"/>
    </location>
    <ligand>
        <name>Zn(2+)</name>
        <dbReference type="ChEBI" id="CHEBI:29105"/>
        <label>1</label>
    </ligand>
</feature>
<feature type="binding site" evidence="1">
    <location>
        <position position="34"/>
    </location>
    <ligand>
        <name>Zn(2+)</name>
        <dbReference type="ChEBI" id="CHEBI:29105"/>
        <label>1</label>
    </ligand>
</feature>
<feature type="binding site" evidence="1">
    <location>
        <position position="37"/>
    </location>
    <ligand>
        <name>Zn(2+)</name>
        <dbReference type="ChEBI" id="CHEBI:29105"/>
        <label>1</label>
    </ligand>
</feature>
<feature type="site" description="Essential for Tat translocation through the endosomal membrane" evidence="1">
    <location>
        <position position="11"/>
    </location>
</feature>
<feature type="modified residue" description="N6-acetyllysine; by host PCAF" evidence="1">
    <location>
        <position position="28"/>
    </location>
</feature>
<feature type="modified residue" description="N6-acetyllysine; by host EP300 and GCN5L2" evidence="1">
    <location>
        <position position="51"/>
    </location>
</feature>
<feature type="modified residue" description="Asymmetric dimethylarginine; by host PRMT6" evidence="1">
    <location>
        <position position="52"/>
    </location>
</feature>
<feature type="cross-link" description="Glycyl lysine isopeptide (Lys-Gly) (interchain with G-Cter in ubiquitin)" evidence="1">
    <location>
        <position position="71"/>
    </location>
</feature>
<reference key="1">
    <citation type="journal article" date="2006" name="Science">
        <title>Chimpanzee reservoirs of pandemic and nonpandemic HIV-1.</title>
        <authorList>
            <person name="Keele B.F."/>
            <person name="Van Heuverswyn F."/>
            <person name="Li Y."/>
            <person name="Bailes E."/>
            <person name="Takehisa J."/>
            <person name="Santiago M.L."/>
            <person name="Bibollet-Ruche F."/>
            <person name="Chen Y."/>
            <person name="Wain L.V."/>
            <person name="Liegeois F."/>
            <person name="Loul S."/>
            <person name="Ngole E.M."/>
            <person name="Bienvenue Y."/>
            <person name="Delaporte E."/>
            <person name="Brookfield J.F."/>
            <person name="Sharp P.M."/>
            <person name="Shaw G.M."/>
            <person name="Peeters M."/>
            <person name="Hahn B.H."/>
        </authorList>
    </citation>
    <scope>NUCLEOTIDE SEQUENCE [GENOMIC RNA]</scope>
</reference>
<keyword id="KW-0007">Acetylation</keyword>
<keyword id="KW-0010">Activator</keyword>
<keyword id="KW-0014">AIDS</keyword>
<keyword id="KW-0053">Apoptosis</keyword>
<keyword id="KW-1035">Host cytoplasm</keyword>
<keyword id="KW-1048">Host nucleus</keyword>
<keyword id="KW-0945">Host-virus interaction</keyword>
<keyword id="KW-1090">Inhibition of host innate immune response by virus</keyword>
<keyword id="KW-1114">Inhibition of host interferon signaling pathway by virus</keyword>
<keyword id="KW-0922">Interferon antiviral system evasion</keyword>
<keyword id="KW-1017">Isopeptide bond</keyword>
<keyword id="KW-0479">Metal-binding</keyword>
<keyword id="KW-0488">Methylation</keyword>
<keyword id="KW-1122">Modulation of host chromatin by virus</keyword>
<keyword id="KW-1126">Modulation of host PP1 activity by virus</keyword>
<keyword id="KW-0597">Phosphoprotein</keyword>
<keyword id="KW-1185">Reference proteome</keyword>
<keyword id="KW-0694">RNA-binding</keyword>
<keyword id="KW-0964">Secreted</keyword>
<keyword id="KW-0804">Transcription</keyword>
<keyword id="KW-0805">Transcription regulation</keyword>
<keyword id="KW-0832">Ubl conjugation</keyword>
<keyword id="KW-0899">Viral immunoevasion</keyword>
<keyword id="KW-0862">Zinc</keyword>
<dbReference type="EMBL" id="DQ373063">
    <property type="protein sequence ID" value="ABD19478.1"/>
    <property type="molecule type" value="Genomic_RNA"/>
</dbReference>
<dbReference type="SMR" id="Q1A264"/>
<dbReference type="Proteomes" id="UP000009152">
    <property type="component" value="Segment"/>
</dbReference>
<dbReference type="GO" id="GO:0005576">
    <property type="term" value="C:extracellular region"/>
    <property type="evidence" value="ECO:0007669"/>
    <property type="project" value="UniProtKB-SubCell"/>
</dbReference>
<dbReference type="GO" id="GO:0030430">
    <property type="term" value="C:host cell cytoplasm"/>
    <property type="evidence" value="ECO:0007669"/>
    <property type="project" value="UniProtKB-SubCell"/>
</dbReference>
<dbReference type="GO" id="GO:0044196">
    <property type="term" value="C:host cell nucleolus"/>
    <property type="evidence" value="ECO:0007669"/>
    <property type="project" value="UniProtKB-SubCell"/>
</dbReference>
<dbReference type="GO" id="GO:0042805">
    <property type="term" value="F:actinin binding"/>
    <property type="evidence" value="ECO:0007669"/>
    <property type="project" value="UniProtKB-UniRule"/>
</dbReference>
<dbReference type="GO" id="GO:0030332">
    <property type="term" value="F:cyclin binding"/>
    <property type="evidence" value="ECO:0007669"/>
    <property type="project" value="UniProtKB-UniRule"/>
</dbReference>
<dbReference type="GO" id="GO:0046872">
    <property type="term" value="F:metal ion binding"/>
    <property type="evidence" value="ECO:0007669"/>
    <property type="project" value="UniProtKB-UniRule"/>
</dbReference>
<dbReference type="GO" id="GO:0019904">
    <property type="term" value="F:protein domain specific binding"/>
    <property type="evidence" value="ECO:0007669"/>
    <property type="project" value="UniProtKB-UniRule"/>
</dbReference>
<dbReference type="GO" id="GO:0004865">
    <property type="term" value="F:protein serine/threonine phosphatase inhibitor activity"/>
    <property type="evidence" value="ECO:0007669"/>
    <property type="project" value="UniProtKB-KW"/>
</dbReference>
<dbReference type="GO" id="GO:0001070">
    <property type="term" value="F:RNA-binding transcription regulator activity"/>
    <property type="evidence" value="ECO:0007669"/>
    <property type="project" value="UniProtKB-UniRule"/>
</dbReference>
<dbReference type="GO" id="GO:1990970">
    <property type="term" value="F:trans-activation response element binding"/>
    <property type="evidence" value="ECO:0007669"/>
    <property type="project" value="UniProtKB-UniRule"/>
</dbReference>
<dbReference type="GO" id="GO:0006351">
    <property type="term" value="P:DNA-templated transcription"/>
    <property type="evidence" value="ECO:0007669"/>
    <property type="project" value="UniProtKB-UniRule"/>
</dbReference>
<dbReference type="GO" id="GO:0032968">
    <property type="term" value="P:positive regulation of transcription elongation by RNA polymerase II"/>
    <property type="evidence" value="ECO:0007669"/>
    <property type="project" value="UniProtKB-UniRule"/>
</dbReference>
<dbReference type="GO" id="GO:0050434">
    <property type="term" value="P:positive regulation of viral transcription"/>
    <property type="evidence" value="ECO:0007669"/>
    <property type="project" value="UniProtKB-UniRule"/>
</dbReference>
<dbReference type="GO" id="GO:0039525">
    <property type="term" value="P:symbiont-mediated perturbation of host chromatin organization"/>
    <property type="evidence" value="ECO:0007669"/>
    <property type="project" value="UniProtKB-UniRule"/>
</dbReference>
<dbReference type="GO" id="GO:0052170">
    <property type="term" value="P:symbiont-mediated suppression of host innate immune response"/>
    <property type="evidence" value="ECO:0007669"/>
    <property type="project" value="UniProtKB-KW"/>
</dbReference>
<dbReference type="GO" id="GO:0039606">
    <property type="term" value="P:symbiont-mediated suppression of host translation initiation"/>
    <property type="evidence" value="ECO:0007669"/>
    <property type="project" value="UniProtKB-KW"/>
</dbReference>
<dbReference type="GO" id="GO:0039502">
    <property type="term" value="P:symbiont-mediated suppression of host type I interferon-mediated signaling pathway"/>
    <property type="evidence" value="ECO:0007669"/>
    <property type="project" value="UniProtKB-UniRule"/>
</dbReference>
<dbReference type="Gene3D" id="4.10.20.10">
    <property type="entry name" value="Tat domain"/>
    <property type="match status" value="1"/>
</dbReference>
<dbReference type="HAMAP" id="MF_04079">
    <property type="entry name" value="HIV_TAT"/>
    <property type="match status" value="1"/>
</dbReference>
<dbReference type="InterPro" id="IPR001831">
    <property type="entry name" value="IV_Tat"/>
</dbReference>
<dbReference type="InterPro" id="IPR036963">
    <property type="entry name" value="Tat_dom_sf"/>
</dbReference>
<dbReference type="Pfam" id="PF00539">
    <property type="entry name" value="Tat"/>
    <property type="match status" value="1"/>
</dbReference>
<dbReference type="PRINTS" id="PR00055">
    <property type="entry name" value="HIVTATDOMAIN"/>
</dbReference>
<organism>
    <name type="scientific">Simian immunodeficiency virus (isolate MB66)</name>
    <name type="common">SIV-cpz</name>
    <name type="synonym">Chimpanzee immunodeficiency virus</name>
    <dbReference type="NCBI Taxonomy" id="388911"/>
    <lineage>
        <taxon>Viruses</taxon>
        <taxon>Riboviria</taxon>
        <taxon>Pararnavirae</taxon>
        <taxon>Artverviricota</taxon>
        <taxon>Revtraviricetes</taxon>
        <taxon>Ortervirales</taxon>
        <taxon>Retroviridae</taxon>
        <taxon>Orthoretrovirinae</taxon>
        <taxon>Lentivirus</taxon>
        <taxon>Simian immunodeficiency virus</taxon>
    </lineage>
</organism>
<sequence>MEPIDPNLEPWNHPGSQPKTACNNCYCKQCCYHCQLCFTKKGLGISYGRRKRKQRRRTSESSQNHQDPVPKQPLSQPGGIETGQKKSKKEVESQTTSDQFA</sequence>
<name>TAT_SIVMB</name>
<gene>
    <name evidence="1" type="primary">tat</name>
</gene>
<protein>
    <recommendedName>
        <fullName evidence="1">Protein Tat</fullName>
    </recommendedName>
    <alternativeName>
        <fullName evidence="1">Transactivating regulatory protein</fullName>
    </alternativeName>
</protein>